<keyword id="KW-0175">Coiled coil</keyword>
<keyword id="KW-1185">Reference proteome</keyword>
<name>YA745_GIBZE</name>
<protein>
    <recommendedName>
        <fullName>Uncharacterized protein FGSG_10745</fullName>
    </recommendedName>
</protein>
<sequence length="353" mass="38717">MAMFPPVEDSVLQNNPDFVNLYNKLTNVVLNSDCSTQNGPRAKERASVRQELDRRRLISAKQHLLTCAISSATPSSTPPATRASSRLQPPKGHQAGGSNSQQQQPSLPEPLLDLLIVLPPLLDANNPPLPQDTLQLLFAHPPLSELETLLPALAPIIASNLRTWALGLARIAHPSTNASFLHRHIASLPTTLSGWRSDLAAAETELSSHRLRSLAALTSLLQAATNALSLLIRALEVKHGKVARSLELRAAEASLHARRYDADAVIAAASVRRAFYTPEAITALRNYGAHLRDAKMRSEERVRGLAAELGEYGVGVDGGENKEKKMREMSRVYREMTRQMDDTRRDLDRLNQG</sequence>
<feature type="chain" id="PRO_0000160271" description="Uncharacterized protein FGSG_10745">
    <location>
        <begin position="1"/>
        <end position="353"/>
    </location>
</feature>
<feature type="region of interest" description="Disordered" evidence="2">
    <location>
        <begin position="69"/>
        <end position="106"/>
    </location>
</feature>
<feature type="coiled-coil region" evidence="1">
    <location>
        <begin position="319"/>
        <end position="353"/>
    </location>
</feature>
<feature type="compositionally biased region" description="Low complexity" evidence="2">
    <location>
        <begin position="70"/>
        <end position="86"/>
    </location>
</feature>
<reference key="1">
    <citation type="journal article" date="2007" name="Science">
        <title>The Fusarium graminearum genome reveals a link between localized polymorphism and pathogen specialization.</title>
        <authorList>
            <person name="Cuomo C.A."/>
            <person name="Gueldener U."/>
            <person name="Xu J.-R."/>
            <person name="Trail F."/>
            <person name="Turgeon B.G."/>
            <person name="Di Pietro A."/>
            <person name="Walton J.D."/>
            <person name="Ma L.-J."/>
            <person name="Baker S.E."/>
            <person name="Rep M."/>
            <person name="Adam G."/>
            <person name="Antoniw J."/>
            <person name="Baldwin T."/>
            <person name="Calvo S.E."/>
            <person name="Chang Y.-L."/>
            <person name="DeCaprio D."/>
            <person name="Gale L.R."/>
            <person name="Gnerre S."/>
            <person name="Goswami R.S."/>
            <person name="Hammond-Kosack K."/>
            <person name="Harris L.J."/>
            <person name="Hilburn K."/>
            <person name="Kennell J.C."/>
            <person name="Kroken S."/>
            <person name="Magnuson J.K."/>
            <person name="Mannhaupt G."/>
            <person name="Mauceli E.W."/>
            <person name="Mewes H.-W."/>
            <person name="Mitterbauer R."/>
            <person name="Muehlbauer G."/>
            <person name="Muensterkoetter M."/>
            <person name="Nelson D."/>
            <person name="O'Donnell K."/>
            <person name="Ouellet T."/>
            <person name="Qi W."/>
            <person name="Quesneville H."/>
            <person name="Roncero M.I.G."/>
            <person name="Seong K.-Y."/>
            <person name="Tetko I.V."/>
            <person name="Urban M."/>
            <person name="Waalwijk C."/>
            <person name="Ward T.J."/>
            <person name="Yao J."/>
            <person name="Birren B.W."/>
            <person name="Kistler H.C."/>
        </authorList>
    </citation>
    <scope>NUCLEOTIDE SEQUENCE [LARGE SCALE GENOMIC DNA]</scope>
    <source>
        <strain>ATCC MYA-4620 / CBS 123657 / FGSC 9075 / NRRL 31084 / PH-1</strain>
    </source>
</reference>
<reference key="2">
    <citation type="journal article" date="2010" name="Nature">
        <title>Comparative genomics reveals mobile pathogenicity chromosomes in Fusarium.</title>
        <authorList>
            <person name="Ma L.-J."/>
            <person name="van der Does H.C."/>
            <person name="Borkovich K.A."/>
            <person name="Coleman J.J."/>
            <person name="Daboussi M.-J."/>
            <person name="Di Pietro A."/>
            <person name="Dufresne M."/>
            <person name="Freitag M."/>
            <person name="Grabherr M."/>
            <person name="Henrissat B."/>
            <person name="Houterman P.M."/>
            <person name="Kang S."/>
            <person name="Shim W.-B."/>
            <person name="Woloshuk C."/>
            <person name="Xie X."/>
            <person name="Xu J.-R."/>
            <person name="Antoniw J."/>
            <person name="Baker S.E."/>
            <person name="Bluhm B.H."/>
            <person name="Breakspear A."/>
            <person name="Brown D.W."/>
            <person name="Butchko R.A.E."/>
            <person name="Chapman S."/>
            <person name="Coulson R."/>
            <person name="Coutinho P.M."/>
            <person name="Danchin E.G.J."/>
            <person name="Diener A."/>
            <person name="Gale L.R."/>
            <person name="Gardiner D.M."/>
            <person name="Goff S."/>
            <person name="Hammond-Kosack K.E."/>
            <person name="Hilburn K."/>
            <person name="Hua-Van A."/>
            <person name="Jonkers W."/>
            <person name="Kazan K."/>
            <person name="Kodira C.D."/>
            <person name="Koehrsen M."/>
            <person name="Kumar L."/>
            <person name="Lee Y.-H."/>
            <person name="Li L."/>
            <person name="Manners J.M."/>
            <person name="Miranda-Saavedra D."/>
            <person name="Mukherjee M."/>
            <person name="Park G."/>
            <person name="Park J."/>
            <person name="Park S.-Y."/>
            <person name="Proctor R.H."/>
            <person name="Regev A."/>
            <person name="Ruiz-Roldan M.C."/>
            <person name="Sain D."/>
            <person name="Sakthikumar S."/>
            <person name="Sykes S."/>
            <person name="Schwartz D.C."/>
            <person name="Turgeon B.G."/>
            <person name="Wapinski I."/>
            <person name="Yoder O."/>
            <person name="Young S."/>
            <person name="Zeng Q."/>
            <person name="Zhou S."/>
            <person name="Galagan J."/>
            <person name="Cuomo C.A."/>
            <person name="Kistler H.C."/>
            <person name="Rep M."/>
        </authorList>
    </citation>
    <scope>GENOME REANNOTATION</scope>
    <source>
        <strain>ATCC MYA-4620 / CBS 123657 / FGSC 9075 / NRRL 31084 / PH-1</strain>
    </source>
</reference>
<reference key="3">
    <citation type="journal article" date="2015" name="BMC Genomics">
        <title>The completed genome sequence of the pathogenic ascomycete fungus Fusarium graminearum.</title>
        <authorList>
            <person name="King R."/>
            <person name="Urban M."/>
            <person name="Hammond-Kosack M.C.U."/>
            <person name="Hassani-Pak K."/>
            <person name="Hammond-Kosack K.E."/>
        </authorList>
    </citation>
    <scope>NUCLEOTIDE SEQUENCE [LARGE SCALE GENOMIC DNA]</scope>
    <source>
        <strain>ATCC MYA-4620 / CBS 123657 / FGSC 9075 / NRRL 31084 / PH-1</strain>
    </source>
</reference>
<gene>
    <name type="ORF">FGRRES_10745</name>
    <name type="ORF">FGSG_10745</name>
</gene>
<proteinExistence type="predicted"/>
<accession>Q4HWB3</accession>
<accession>A0A0E0SQP9</accession>
<accession>I1S1X0</accession>
<accession>V6RU75</accession>
<evidence type="ECO:0000255" key="1"/>
<evidence type="ECO:0000256" key="2">
    <source>
        <dbReference type="SAM" id="MobiDB-lite"/>
    </source>
</evidence>
<organism>
    <name type="scientific">Gibberella zeae (strain ATCC MYA-4620 / CBS 123657 / FGSC 9075 / NRRL 31084 / PH-1)</name>
    <name type="common">Wheat head blight fungus</name>
    <name type="synonym">Fusarium graminearum</name>
    <dbReference type="NCBI Taxonomy" id="229533"/>
    <lineage>
        <taxon>Eukaryota</taxon>
        <taxon>Fungi</taxon>
        <taxon>Dikarya</taxon>
        <taxon>Ascomycota</taxon>
        <taxon>Pezizomycotina</taxon>
        <taxon>Sordariomycetes</taxon>
        <taxon>Hypocreomycetidae</taxon>
        <taxon>Hypocreales</taxon>
        <taxon>Nectriaceae</taxon>
        <taxon>Fusarium</taxon>
    </lineage>
</organism>
<dbReference type="EMBL" id="DS231670">
    <property type="protein sequence ID" value="ESU18041.1"/>
    <property type="molecule type" value="Genomic_DNA"/>
</dbReference>
<dbReference type="EMBL" id="HG970334">
    <property type="protein sequence ID" value="CEF88762.1"/>
    <property type="molecule type" value="Genomic_DNA"/>
</dbReference>
<dbReference type="RefSeq" id="XP_011325663.1">
    <property type="nucleotide sequence ID" value="XM_011327361.1"/>
</dbReference>
<dbReference type="SMR" id="Q4HWB3"/>
<dbReference type="STRING" id="229533.Q4HWB3"/>
<dbReference type="GeneID" id="23557630"/>
<dbReference type="KEGG" id="fgr:FGSG_10745"/>
<dbReference type="VEuPathDB" id="FungiDB:FGRAMPH1_01G20355"/>
<dbReference type="eggNOG" id="ENOG502ST0H">
    <property type="taxonomic scope" value="Eukaryota"/>
</dbReference>
<dbReference type="HOGENOM" id="CLU_054584_0_0_1"/>
<dbReference type="InParanoid" id="Q4HWB3"/>
<dbReference type="OrthoDB" id="137310at110618"/>
<dbReference type="Proteomes" id="UP000070720">
    <property type="component" value="Chromosome 3"/>
</dbReference>